<name>NA122_ACTEQ</name>
<proteinExistence type="inferred from homology"/>
<organism>
    <name type="scientific">Actinia equina</name>
    <name type="common">Beadlet anemone</name>
    <dbReference type="NCBI Taxonomy" id="6106"/>
    <lineage>
        <taxon>Eukaryota</taxon>
        <taxon>Metazoa</taxon>
        <taxon>Cnidaria</taxon>
        <taxon>Anthozoa</taxon>
        <taxon>Hexacorallia</taxon>
        <taxon>Actiniaria</taxon>
        <taxon>Actiniidae</taxon>
        <taxon>Actinia</taxon>
    </lineage>
</organism>
<reference key="1">
    <citation type="journal article" date="2008" name="Mol. Biol. Evol.">
        <title>Concerted evolution of sea anemone neurotoxin genes is revealed through analysis of the Nematostella vectensis genome.</title>
        <authorList>
            <person name="Moran Y."/>
            <person name="Weinberger H."/>
            <person name="Sullivan J.C."/>
            <person name="Reitzel A.M."/>
            <person name="Finnerty J.R."/>
            <person name="Gurevitz M."/>
        </authorList>
    </citation>
    <scope>NUCLEOTIDE SEQUENCE [GENOMIC DNA]</scope>
</reference>
<reference key="2">
    <citation type="journal article" date="2012" name="Toxicon">
        <title>Development of a rational nomenclature for naming peptide and protein toxins from sea anemones.</title>
        <authorList>
            <person name="Oliveira J.S."/>
            <person name="Fuentes-Silva D."/>
            <person name="King G.F."/>
        </authorList>
    </citation>
    <scope>NOMENCLATURE</scope>
</reference>
<feature type="signal peptide" evidence="3">
    <location>
        <begin position="1"/>
        <end position="19"/>
    </location>
</feature>
<feature type="propeptide" id="PRO_0000433576" evidence="2">
    <location>
        <begin position="20"/>
        <end position="26"/>
    </location>
</feature>
<feature type="chain" id="PRO_5000319687" description="Delta-actitoxin-Aeq2b 2" evidence="1">
    <location>
        <begin position="29"/>
        <end position="82"/>
    </location>
</feature>
<feature type="disulfide bond" evidence="1">
    <location>
        <begin position="32"/>
        <end position="79"/>
    </location>
</feature>
<feature type="disulfide bond" evidence="1">
    <location>
        <begin position="34"/>
        <end position="69"/>
    </location>
</feature>
<feature type="disulfide bond" evidence="1">
    <location>
        <begin position="62"/>
        <end position="80"/>
    </location>
</feature>
<evidence type="ECO:0000250" key="1">
    <source>
        <dbReference type="UniProtKB" id="P01530"/>
    </source>
</evidence>
<evidence type="ECO:0000250" key="2">
    <source>
        <dbReference type="UniProtKB" id="Q9NJQ2"/>
    </source>
</evidence>
<evidence type="ECO:0000255" key="3"/>
<evidence type="ECO:0000303" key="4">
    <source>
    </source>
</evidence>
<evidence type="ECO:0000303" key="5">
    <source>
    </source>
</evidence>
<evidence type="ECO:0000305" key="6"/>
<evidence type="ECO:0000312" key="7">
    <source>
        <dbReference type="EMBL" id="ABW97359.1"/>
    </source>
</evidence>
<dbReference type="EMBL" id="EU124480">
    <property type="protein sequence ID" value="ABW97359.1"/>
    <property type="molecule type" value="Genomic_DNA"/>
</dbReference>
<dbReference type="GO" id="GO:0005576">
    <property type="term" value="C:extracellular region"/>
    <property type="evidence" value="ECO:0007669"/>
    <property type="project" value="UniProtKB-SubCell"/>
</dbReference>
<dbReference type="GO" id="GO:0042151">
    <property type="term" value="C:nematocyst"/>
    <property type="evidence" value="ECO:0007669"/>
    <property type="project" value="UniProtKB-SubCell"/>
</dbReference>
<dbReference type="GO" id="GO:0017080">
    <property type="term" value="F:sodium channel regulator activity"/>
    <property type="evidence" value="ECO:0007669"/>
    <property type="project" value="UniProtKB-KW"/>
</dbReference>
<dbReference type="GO" id="GO:0090729">
    <property type="term" value="F:toxin activity"/>
    <property type="evidence" value="ECO:0007669"/>
    <property type="project" value="UniProtKB-KW"/>
</dbReference>
<dbReference type="Gene3D" id="2.20.20.10">
    <property type="entry name" value="Anthopleurin-A"/>
    <property type="match status" value="1"/>
</dbReference>
<dbReference type="InterPro" id="IPR023355">
    <property type="entry name" value="Myo_ane_neurotoxin_sf"/>
</dbReference>
<dbReference type="Pfam" id="PF00706">
    <property type="entry name" value="Toxin_4"/>
    <property type="match status" value="1"/>
</dbReference>
<dbReference type="SUPFAM" id="SSF57392">
    <property type="entry name" value="Defensin-like"/>
    <property type="match status" value="1"/>
</dbReference>
<accession>B1NWU3</accession>
<comment type="function">
    <text evidence="2">Binds specifically to voltage-gated sodium channels (Nav), thereby delaying their inactivation during signal transduction. Causes death to crabs.</text>
</comment>
<comment type="subcellular location">
    <subcellularLocation>
        <location evidence="6">Secreted</location>
    </subcellularLocation>
    <subcellularLocation>
        <location evidence="6">Nematocyst</location>
    </subcellularLocation>
</comment>
<comment type="similarity">
    <text evidence="6">Belongs to the sea anemone sodium channel inhibitory toxin family. Type I subfamily.</text>
</comment>
<sequence>MNRLMILVFAAVFLALASADEDVDIAKRGVPCLCVSDGPRPRGNNLSGIMWMKTGGYGGNGCPKGWHFCGKSRGFFSDCCKR</sequence>
<protein>
    <recommendedName>
        <fullName evidence="5">Delta-actitoxin-Aeq2b 2</fullName>
        <shortName evidence="5">Delta-AITX-Aeq2b 2</shortName>
    </recommendedName>
    <alternativeName>
        <fullName evidence="4">Ae2-2</fullName>
    </alternativeName>
    <alternativeName>
        <fullName evidence="7">Neurotoxin 2-2</fullName>
    </alternativeName>
</protein>
<keyword id="KW-0165">Cleavage on pair of basic residues</keyword>
<keyword id="KW-1015">Disulfide bond</keyword>
<keyword id="KW-0872">Ion channel impairing toxin</keyword>
<keyword id="KW-0166">Nematocyst</keyword>
<keyword id="KW-0528">Neurotoxin</keyword>
<keyword id="KW-0964">Secreted</keyword>
<keyword id="KW-0732">Signal</keyword>
<keyword id="KW-0800">Toxin</keyword>
<keyword id="KW-0738">Voltage-gated sodium channel impairing toxin</keyword>